<comment type="function">
    <text evidence="4 5">Involved in the biogenesis of the plastid translation machinery by promoting the splicing of group II introns in chloroplasts. Stabilizes the chloroplast trnG pre-RNA by directly binding to a group II intron, where it protects an endonuclease-sensitive site and stimulates splicing (PubMed:18591259). Binds specific sites within group II intron trnG pre-RNA. Binds with high affinity to the 5'-UTR of the chloroplastic petA mRNA (PubMed:18669444).</text>
</comment>
<comment type="subcellular location">
    <subcellularLocation>
        <location evidence="1">Plastid</location>
        <location evidence="1">Chloroplast</location>
    </subcellularLocation>
</comment>
<comment type="disruption phenotype">
    <text evidence="4">Albino or pale green seedlings. Seedling lethality.</text>
</comment>
<comment type="similarity">
    <text evidence="7">Belongs to the PPR family. P subfamily.</text>
</comment>
<feature type="transit peptide" description="Chloroplast" evidence="1">
    <location>
        <begin position="1"/>
        <end position="45"/>
    </location>
</feature>
<feature type="chain" id="PRO_0000441902" description="Pentatricopeptide repeat-containing protein PPR5, chloroplastic">
    <location>
        <begin position="46"/>
        <end position="499"/>
    </location>
</feature>
<feature type="repeat" description="PPR 1" evidence="2">
    <location>
        <begin position="123"/>
        <end position="157"/>
    </location>
</feature>
<feature type="repeat" description="PPR 2" evidence="2">
    <location>
        <begin position="158"/>
        <end position="193"/>
    </location>
</feature>
<feature type="repeat" description="PPR 3" evidence="2">
    <location>
        <begin position="198"/>
        <end position="232"/>
    </location>
</feature>
<feature type="repeat" description="PPR 4" evidence="2">
    <location>
        <begin position="233"/>
        <end position="267"/>
    </location>
</feature>
<feature type="repeat" description="PPR 5" evidence="2">
    <location>
        <begin position="268"/>
        <end position="302"/>
    </location>
</feature>
<feature type="repeat" description="PPR 6" evidence="2">
    <location>
        <begin position="303"/>
        <end position="337"/>
    </location>
</feature>
<feature type="repeat" description="PPR 7" evidence="2">
    <location>
        <begin position="338"/>
        <end position="372"/>
    </location>
</feature>
<feature type="repeat" description="PPR 8" evidence="2">
    <location>
        <begin position="373"/>
        <end position="407"/>
    </location>
</feature>
<feature type="repeat" description="PPR 9" evidence="2">
    <location>
        <begin position="408"/>
        <end position="442"/>
    </location>
</feature>
<feature type="region of interest" description="Disordered" evidence="3">
    <location>
        <begin position="1"/>
        <end position="28"/>
    </location>
</feature>
<feature type="region of interest" description="Disordered" evidence="3">
    <location>
        <begin position="458"/>
        <end position="499"/>
    </location>
</feature>
<feature type="compositionally biased region" description="Low complexity" evidence="3">
    <location>
        <begin position="1"/>
        <end position="12"/>
    </location>
</feature>
<feature type="compositionally biased region" description="Polar residues" evidence="3">
    <location>
        <begin position="465"/>
        <end position="484"/>
    </location>
</feature>
<gene>
    <name evidence="6" type="primary">PPR5</name>
    <name evidence="8" type="ORF">ZEAMMB73_Zm00001d052240</name>
</gene>
<reference key="1">
    <citation type="journal article" date="2008" name="Mol. Cell. Biol.">
        <title>The pentatricopeptide repeat protein PPR5 stabilizes a specific tRNA precursor in maize chloroplasts.</title>
        <authorList>
            <person name="Beick S."/>
            <person name="Schmitz-Linneweber C."/>
            <person name="Williams-Carrier R."/>
            <person name="Jensen B."/>
            <person name="Barkan A."/>
        </authorList>
    </citation>
    <scope>NUCLEOTIDE SEQUENCE [MRNA]</scope>
    <scope>FUNCTION</scope>
    <scope>DISRUPTION PHENOTYPE</scope>
    <source>
        <strain>cv. B73</strain>
    </source>
</reference>
<reference key="2">
    <citation type="journal article" date="2009" name="Science">
        <title>The B73 maize genome: complexity, diversity, and dynamics.</title>
        <authorList>
            <person name="Schnable P.S."/>
            <person name="Ware D."/>
            <person name="Fulton R.S."/>
            <person name="Stein J.C."/>
            <person name="Wei F."/>
            <person name="Pasternak S."/>
            <person name="Liang C."/>
            <person name="Zhang J."/>
            <person name="Fulton L."/>
            <person name="Graves T.A."/>
            <person name="Minx P."/>
            <person name="Reily A.D."/>
            <person name="Courtney L."/>
            <person name="Kruchowski S.S."/>
            <person name="Tomlinson C."/>
            <person name="Strong C."/>
            <person name="Delehaunty K."/>
            <person name="Fronick C."/>
            <person name="Courtney B."/>
            <person name="Rock S.M."/>
            <person name="Belter E."/>
            <person name="Du F."/>
            <person name="Kim K."/>
            <person name="Abbott R.M."/>
            <person name="Cotton M."/>
            <person name="Levy A."/>
            <person name="Marchetto P."/>
            <person name="Ochoa K."/>
            <person name="Jackson S.M."/>
            <person name="Gillam B."/>
            <person name="Chen W."/>
            <person name="Yan L."/>
            <person name="Higginbotham J."/>
            <person name="Cardenas M."/>
            <person name="Waligorski J."/>
            <person name="Applebaum E."/>
            <person name="Phelps L."/>
            <person name="Falcone J."/>
            <person name="Kanchi K."/>
            <person name="Thane T."/>
            <person name="Scimone A."/>
            <person name="Thane N."/>
            <person name="Henke J."/>
            <person name="Wang T."/>
            <person name="Ruppert J."/>
            <person name="Shah N."/>
            <person name="Rotter K."/>
            <person name="Hodges J."/>
            <person name="Ingenthron E."/>
            <person name="Cordes M."/>
            <person name="Kohlberg S."/>
            <person name="Sgro J."/>
            <person name="Delgado B."/>
            <person name="Mead K."/>
            <person name="Chinwalla A."/>
            <person name="Leonard S."/>
            <person name="Crouse K."/>
            <person name="Collura K."/>
            <person name="Kudrna D."/>
            <person name="Currie J."/>
            <person name="He R."/>
            <person name="Angelova A."/>
            <person name="Rajasekar S."/>
            <person name="Mueller T."/>
            <person name="Lomeli R."/>
            <person name="Scara G."/>
            <person name="Ko A."/>
            <person name="Delaney K."/>
            <person name="Wissotski M."/>
            <person name="Lopez G."/>
            <person name="Campos D."/>
            <person name="Braidotti M."/>
            <person name="Ashley E."/>
            <person name="Golser W."/>
            <person name="Kim H."/>
            <person name="Lee S."/>
            <person name="Lin J."/>
            <person name="Dujmic Z."/>
            <person name="Kim W."/>
            <person name="Talag J."/>
            <person name="Zuccolo A."/>
            <person name="Fan C."/>
            <person name="Sebastian A."/>
            <person name="Kramer M."/>
            <person name="Spiegel L."/>
            <person name="Nascimento L."/>
            <person name="Zutavern T."/>
            <person name="Miller B."/>
            <person name="Ambroise C."/>
            <person name="Muller S."/>
            <person name="Spooner W."/>
            <person name="Narechania A."/>
            <person name="Ren L."/>
            <person name="Wei S."/>
            <person name="Kumari S."/>
            <person name="Faga B."/>
            <person name="Levy M.J."/>
            <person name="McMahan L."/>
            <person name="Van Buren P."/>
            <person name="Vaughn M.W."/>
            <person name="Ying K."/>
            <person name="Yeh C.-T."/>
            <person name="Emrich S.J."/>
            <person name="Jia Y."/>
            <person name="Kalyanaraman A."/>
            <person name="Hsia A.-P."/>
            <person name="Barbazuk W.B."/>
            <person name="Baucom R.S."/>
            <person name="Brutnell T.P."/>
            <person name="Carpita N.C."/>
            <person name="Chaparro C."/>
            <person name="Chia J.-M."/>
            <person name="Deragon J.-M."/>
            <person name="Estill J.C."/>
            <person name="Fu Y."/>
            <person name="Jeddeloh J.A."/>
            <person name="Han Y."/>
            <person name="Lee H."/>
            <person name="Li P."/>
            <person name="Lisch D.R."/>
            <person name="Liu S."/>
            <person name="Liu Z."/>
            <person name="Nagel D.H."/>
            <person name="McCann M.C."/>
            <person name="SanMiguel P."/>
            <person name="Myers A.M."/>
            <person name="Nettleton D."/>
            <person name="Nguyen J."/>
            <person name="Penning B.W."/>
            <person name="Ponnala L."/>
            <person name="Schneider K.L."/>
            <person name="Schwartz D.C."/>
            <person name="Sharma A."/>
            <person name="Soderlund C."/>
            <person name="Springer N.M."/>
            <person name="Sun Q."/>
            <person name="Wang H."/>
            <person name="Waterman M."/>
            <person name="Westerman R."/>
            <person name="Wolfgruber T.K."/>
            <person name="Yang L."/>
            <person name="Yu Y."/>
            <person name="Zhang L."/>
            <person name="Zhou S."/>
            <person name="Zhu Q."/>
            <person name="Bennetzen J.L."/>
            <person name="Dawe R.K."/>
            <person name="Jiang J."/>
            <person name="Jiang N."/>
            <person name="Presting G.G."/>
            <person name="Wessler S.R."/>
            <person name="Aluru S."/>
            <person name="Martienssen R.A."/>
            <person name="Clifton S.W."/>
            <person name="McCombie W.R."/>
            <person name="Wing R.A."/>
            <person name="Wilson R.K."/>
        </authorList>
    </citation>
    <scope>NUCLEOTIDE SEQUENCE [LARGE SCALE GENOMIC DNA]</scope>
    <source>
        <strain>cv. B73</strain>
    </source>
</reference>
<reference key="3">
    <citation type="journal article" date="2009" name="PLoS Genet.">
        <title>Sequencing, mapping, and analysis of 27,455 maize full-length cDNAs.</title>
        <authorList>
            <person name="Soderlund C."/>
            <person name="Descour A."/>
            <person name="Kudrna D."/>
            <person name="Bomhoff M."/>
            <person name="Boyd L."/>
            <person name="Currie J."/>
            <person name="Angelova A."/>
            <person name="Collura K."/>
            <person name="Wissotski M."/>
            <person name="Ashley E."/>
            <person name="Morrow D."/>
            <person name="Fernandes J."/>
            <person name="Walbot V."/>
            <person name="Yu Y."/>
        </authorList>
    </citation>
    <scope>NUCLEOTIDE SEQUENCE [LARGE SCALE MRNA] OF 110-499</scope>
    <source>
        <strain>cv. B73</strain>
    </source>
</reference>
<reference key="4">
    <citation type="journal article" date="2008" name="RNA">
        <title>Sequence-specific binding of a chloroplast pentatricopeptide repeat protein to its native group II intron ligand.</title>
        <authorList>
            <person name="Williams-Carrier R."/>
            <person name="Kroeger T."/>
            <person name="Barkan A."/>
        </authorList>
    </citation>
    <scope>FUNCTION</scope>
</reference>
<name>PPR5_MAIZE</name>
<proteinExistence type="evidence at transcript level"/>
<protein>
    <recommendedName>
        <fullName evidence="7">Pentatricopeptide repeat-containing protein PPR5, chloroplastic</fullName>
    </recommendedName>
    <alternativeName>
        <fullName evidence="6">Pentatricopeptide repeat-containing protein 5</fullName>
        <shortName evidence="6">ZmPPR5</shortName>
    </alternativeName>
</protein>
<organism>
    <name type="scientific">Zea mays</name>
    <name type="common">Maize</name>
    <dbReference type="NCBI Taxonomy" id="4577"/>
    <lineage>
        <taxon>Eukaryota</taxon>
        <taxon>Viridiplantae</taxon>
        <taxon>Streptophyta</taxon>
        <taxon>Embryophyta</taxon>
        <taxon>Tracheophyta</taxon>
        <taxon>Spermatophyta</taxon>
        <taxon>Magnoliopsida</taxon>
        <taxon>Liliopsida</taxon>
        <taxon>Poales</taxon>
        <taxon>Poaceae</taxon>
        <taxon>PACMAD clade</taxon>
        <taxon>Panicoideae</taxon>
        <taxon>Andropogonodae</taxon>
        <taxon>Andropogoneae</taxon>
        <taxon>Tripsacinae</taxon>
        <taxon>Zea</taxon>
    </lineage>
</organism>
<accession>A7LN87</accession>
<accession>C0P2Q7</accession>
<sequence>MLACPSTSSPWPQRQPPSPCPGGGGGATRHVALAARSKRRGAGPAAAEGVDEAAAEAAELVRSLLRRTAGGKERLVPVLDRHVRVVRTEHCFLLFEELGRRDAWLQCLDVFRWMQKQRWYVADNGIYSKLISVMGRKGQIRMAMWLFSQMRNSGCKPDTSVYNSLIGAHLHSRDKTKALAKALGYFEKMKCIERCQPTIVTYNILLRAFAQAGDTKQVDMLFKDLDESVVSPDVYTYNGVLDAYGKNGMIKEMESVLVRMKSTQCRPDVITFNILIDSYGRKQTFDKMEQVFKSLLRSKERPTHPTFNSMITNYGRARLREKAESVVEKMEELGFKPNYVTQECLIIMYAHCDCVSKARQVFDELVTSQTKVHLSSLNSMLEAYCMNGLHTEADRLLDTALQQCVVPNGSTYKLLYKAYTKANDKLLVQKLLKRMNKQGIVPNKKFFLDALEAFGTSDRKPRTSPGINSASKPSTDSAGDSETATSDKPEVSVWHVAAT</sequence>
<keyword id="KW-0150">Chloroplast</keyword>
<keyword id="KW-0507">mRNA processing</keyword>
<keyword id="KW-0508">mRNA splicing</keyword>
<keyword id="KW-0934">Plastid</keyword>
<keyword id="KW-1185">Reference proteome</keyword>
<keyword id="KW-0677">Repeat</keyword>
<keyword id="KW-0694">RNA-binding</keyword>
<keyword id="KW-0809">Transit peptide</keyword>
<keyword id="KW-0810">Translation regulation</keyword>
<dbReference type="EMBL" id="EU037901">
    <property type="protein sequence ID" value="ABS82814.1"/>
    <property type="molecule type" value="mRNA"/>
</dbReference>
<dbReference type="EMBL" id="CM000780">
    <property type="protein sequence ID" value="AQK56524.1"/>
    <property type="molecule type" value="Genomic_DNA"/>
</dbReference>
<dbReference type="EMBL" id="BT062576">
    <property type="protein sequence ID" value="ACN27273.1"/>
    <property type="molecule type" value="mRNA"/>
</dbReference>
<dbReference type="RefSeq" id="NP_001106062.1">
    <property type="nucleotide sequence ID" value="NM_001112592.1"/>
</dbReference>
<dbReference type="SMR" id="A7LN87"/>
<dbReference type="FunCoup" id="A7LN87">
    <property type="interactions" value="2508"/>
</dbReference>
<dbReference type="STRING" id="4577.A7LN87"/>
<dbReference type="PaxDb" id="4577-GRMZM2G025409_P01"/>
<dbReference type="GeneID" id="100126361"/>
<dbReference type="KEGG" id="zma:100126361"/>
<dbReference type="eggNOG" id="KOG4197">
    <property type="taxonomic scope" value="Eukaryota"/>
</dbReference>
<dbReference type="InParanoid" id="A7LN87"/>
<dbReference type="OMA" id="YCINGLP"/>
<dbReference type="OrthoDB" id="185373at2759"/>
<dbReference type="Proteomes" id="UP000007305">
    <property type="component" value="Unplaced"/>
</dbReference>
<dbReference type="ExpressionAtlas" id="A7LN87">
    <property type="expression patterns" value="baseline and differential"/>
</dbReference>
<dbReference type="GO" id="GO:0009507">
    <property type="term" value="C:chloroplast"/>
    <property type="evidence" value="ECO:0007669"/>
    <property type="project" value="UniProtKB-SubCell"/>
</dbReference>
<dbReference type="GO" id="GO:0003729">
    <property type="term" value="F:mRNA binding"/>
    <property type="evidence" value="ECO:0007669"/>
    <property type="project" value="InterPro"/>
</dbReference>
<dbReference type="GO" id="GO:0003727">
    <property type="term" value="F:single-stranded RNA binding"/>
    <property type="evidence" value="ECO:0000314"/>
    <property type="project" value="UniProtKB"/>
</dbReference>
<dbReference type="GO" id="GO:0031425">
    <property type="term" value="P:chloroplast RNA processing"/>
    <property type="evidence" value="ECO:0000315"/>
    <property type="project" value="UniProtKB"/>
</dbReference>
<dbReference type="GO" id="GO:0000373">
    <property type="term" value="P:Group II intron splicing"/>
    <property type="evidence" value="ECO:0000314"/>
    <property type="project" value="UniProtKB"/>
</dbReference>
<dbReference type="GO" id="GO:0006397">
    <property type="term" value="P:mRNA processing"/>
    <property type="evidence" value="ECO:0007669"/>
    <property type="project" value="UniProtKB-KW"/>
</dbReference>
<dbReference type="GO" id="GO:0006417">
    <property type="term" value="P:regulation of translation"/>
    <property type="evidence" value="ECO:0007669"/>
    <property type="project" value="UniProtKB-KW"/>
</dbReference>
<dbReference type="FunFam" id="1.25.40.10:FF:000924">
    <property type="entry name" value="Pentatricopeptide repeat-containing protein At4g39620, chloroplastic"/>
    <property type="match status" value="1"/>
</dbReference>
<dbReference type="FunFam" id="1.25.40.10:FF:002938">
    <property type="entry name" value="Pentatricopeptide repeat-containing protein At4g39620, chloroplastic"/>
    <property type="match status" value="1"/>
</dbReference>
<dbReference type="FunFam" id="1.25.40.10:FF:000291">
    <property type="entry name" value="Pentatricopeptide repeat-containing protein PPR5, chloroplastic"/>
    <property type="match status" value="1"/>
</dbReference>
<dbReference type="Gene3D" id="1.25.40.10">
    <property type="entry name" value="Tetratricopeptide repeat domain"/>
    <property type="match status" value="3"/>
</dbReference>
<dbReference type="InterPro" id="IPR002885">
    <property type="entry name" value="Pentatricopeptide_rpt"/>
</dbReference>
<dbReference type="InterPro" id="IPR044179">
    <property type="entry name" value="PPR5-like"/>
</dbReference>
<dbReference type="InterPro" id="IPR011990">
    <property type="entry name" value="TPR-like_helical_dom_sf"/>
</dbReference>
<dbReference type="NCBIfam" id="TIGR00756">
    <property type="entry name" value="PPR"/>
    <property type="match status" value="5"/>
</dbReference>
<dbReference type="PANTHER" id="PTHR47874">
    <property type="entry name" value="EXPRESSED PROTEIN"/>
    <property type="match status" value="1"/>
</dbReference>
<dbReference type="PANTHER" id="PTHR47874:SF5">
    <property type="entry name" value="PENTATRICOPEPTIDE REPEAT-CONTAINING PROTEIN PPR5 HOMOLOG, CHLOROPLASTIC"/>
    <property type="match status" value="1"/>
</dbReference>
<dbReference type="Pfam" id="PF01535">
    <property type="entry name" value="PPR"/>
    <property type="match status" value="1"/>
</dbReference>
<dbReference type="Pfam" id="PF13041">
    <property type="entry name" value="PPR_2"/>
    <property type="match status" value="2"/>
</dbReference>
<dbReference type="Pfam" id="PF13812">
    <property type="entry name" value="PPR_3"/>
    <property type="match status" value="2"/>
</dbReference>
<dbReference type="SUPFAM" id="SSF48452">
    <property type="entry name" value="TPR-like"/>
    <property type="match status" value="1"/>
</dbReference>
<dbReference type="PROSITE" id="PS51375">
    <property type="entry name" value="PPR"/>
    <property type="match status" value="9"/>
</dbReference>
<evidence type="ECO:0000255" key="1"/>
<evidence type="ECO:0000255" key="2">
    <source>
        <dbReference type="PROSITE-ProRule" id="PRU00708"/>
    </source>
</evidence>
<evidence type="ECO:0000256" key="3">
    <source>
        <dbReference type="SAM" id="MobiDB-lite"/>
    </source>
</evidence>
<evidence type="ECO:0000269" key="4">
    <source>
    </source>
</evidence>
<evidence type="ECO:0000269" key="5">
    <source>
    </source>
</evidence>
<evidence type="ECO:0000303" key="6">
    <source>
    </source>
</evidence>
<evidence type="ECO:0000305" key="7"/>
<evidence type="ECO:0000312" key="8">
    <source>
        <dbReference type="EMBL" id="AQK56524.1"/>
    </source>
</evidence>